<gene>
    <name evidence="1" type="primary">prfB</name>
    <name type="ordered locus">Strop_0981</name>
</gene>
<reference key="1">
    <citation type="journal article" date="2007" name="Proc. Natl. Acad. Sci. U.S.A.">
        <title>Genome sequencing reveals complex secondary metabolome in the marine actinomycete Salinispora tropica.</title>
        <authorList>
            <person name="Udwary D.W."/>
            <person name="Zeigler L."/>
            <person name="Asolkar R.N."/>
            <person name="Singan V."/>
            <person name="Lapidus A."/>
            <person name="Fenical W."/>
            <person name="Jensen P.R."/>
            <person name="Moore B.S."/>
        </authorList>
    </citation>
    <scope>NUCLEOTIDE SEQUENCE [LARGE SCALE GENOMIC DNA]</scope>
    <source>
        <strain>ATCC BAA-916 / DSM 44818 / JCM 13857 / NBRC 105044 / CNB-440</strain>
    </source>
</reference>
<accession>A4X3K6</accession>
<organism>
    <name type="scientific">Salinispora tropica (strain ATCC BAA-916 / DSM 44818 / JCM 13857 / NBRC 105044 / CNB-440)</name>
    <dbReference type="NCBI Taxonomy" id="369723"/>
    <lineage>
        <taxon>Bacteria</taxon>
        <taxon>Bacillati</taxon>
        <taxon>Actinomycetota</taxon>
        <taxon>Actinomycetes</taxon>
        <taxon>Micromonosporales</taxon>
        <taxon>Micromonosporaceae</taxon>
        <taxon>Salinispora</taxon>
    </lineage>
</organism>
<sequence>MTDADYAEQLKDLDATLRNIESVLDIDRLRADKARLEEAASAPDLWDDQARAQQVTSQLSYVNGEINKLAELRSRLDDAKVLLELAEAESDPGALTEVEAEVAGLAKAIDEMEVRTLLSGEYDSREALVAIRAGAGGVDAADFAEMLLRMYLRWAERHGYPTEVYETSYAEEAGLKSATFTVKVPYAYGTLSVESGTHRLVRISPFDNQGRRQTSFAGVEVLPVVEQTDHIDIPENEMRFDVYRSSGPGGQSVNTTDSAVRITHIPTGIVVTCQNEKSQLQNKASALRVLQARLLERKRQEEQAKLQGLKTDAAGSWGDQMRSYVLHPYQMVKDLRTEQETGTPAAVFDGELDAFIEAGIRWRKQQQLADDNA</sequence>
<comment type="function">
    <text evidence="1">Peptide chain release factor 2 directs the termination of translation in response to the peptide chain termination codons UGA and UAA.</text>
</comment>
<comment type="subcellular location">
    <subcellularLocation>
        <location evidence="1">Cytoplasm</location>
    </subcellularLocation>
</comment>
<comment type="PTM">
    <text evidence="1">Methylated by PrmC. Methylation increases the termination efficiency of RF2.</text>
</comment>
<comment type="similarity">
    <text evidence="1">Belongs to the prokaryotic/mitochondrial release factor family.</text>
</comment>
<proteinExistence type="inferred from homology"/>
<name>RF2_SALTO</name>
<dbReference type="EMBL" id="CP000667">
    <property type="protein sequence ID" value="ABP53456.1"/>
    <property type="molecule type" value="Genomic_DNA"/>
</dbReference>
<dbReference type="RefSeq" id="WP_011904890.1">
    <property type="nucleotide sequence ID" value="NC_009380.1"/>
</dbReference>
<dbReference type="SMR" id="A4X3K6"/>
<dbReference type="STRING" id="369723.Strop_0981"/>
<dbReference type="KEGG" id="stp:Strop_0981"/>
<dbReference type="PATRIC" id="fig|369723.5.peg.1000"/>
<dbReference type="eggNOG" id="COG1186">
    <property type="taxonomic scope" value="Bacteria"/>
</dbReference>
<dbReference type="HOGENOM" id="CLU_036856_6_0_11"/>
<dbReference type="Proteomes" id="UP000000235">
    <property type="component" value="Chromosome"/>
</dbReference>
<dbReference type="GO" id="GO:0005737">
    <property type="term" value="C:cytoplasm"/>
    <property type="evidence" value="ECO:0007669"/>
    <property type="project" value="UniProtKB-SubCell"/>
</dbReference>
<dbReference type="GO" id="GO:0016149">
    <property type="term" value="F:translation release factor activity, codon specific"/>
    <property type="evidence" value="ECO:0007669"/>
    <property type="project" value="UniProtKB-UniRule"/>
</dbReference>
<dbReference type="FunFam" id="3.30.160.20:FF:000010">
    <property type="entry name" value="Peptide chain release factor 2"/>
    <property type="match status" value="1"/>
</dbReference>
<dbReference type="Gene3D" id="3.30.160.20">
    <property type="match status" value="1"/>
</dbReference>
<dbReference type="Gene3D" id="3.30.70.1660">
    <property type="match status" value="1"/>
</dbReference>
<dbReference type="Gene3D" id="1.20.58.410">
    <property type="entry name" value="Release factor"/>
    <property type="match status" value="1"/>
</dbReference>
<dbReference type="HAMAP" id="MF_00094">
    <property type="entry name" value="Rel_fac_2"/>
    <property type="match status" value="1"/>
</dbReference>
<dbReference type="InterPro" id="IPR005139">
    <property type="entry name" value="PCRF"/>
</dbReference>
<dbReference type="InterPro" id="IPR000352">
    <property type="entry name" value="Pep_chain_release_fac_I"/>
</dbReference>
<dbReference type="InterPro" id="IPR045853">
    <property type="entry name" value="Pep_chain_release_fac_I_sf"/>
</dbReference>
<dbReference type="InterPro" id="IPR004374">
    <property type="entry name" value="PrfB"/>
</dbReference>
<dbReference type="NCBIfam" id="TIGR00020">
    <property type="entry name" value="prfB"/>
    <property type="match status" value="1"/>
</dbReference>
<dbReference type="PANTHER" id="PTHR43116:SF3">
    <property type="entry name" value="CLASS I PEPTIDE CHAIN RELEASE FACTOR"/>
    <property type="match status" value="1"/>
</dbReference>
<dbReference type="PANTHER" id="PTHR43116">
    <property type="entry name" value="PEPTIDE CHAIN RELEASE FACTOR 2"/>
    <property type="match status" value="1"/>
</dbReference>
<dbReference type="Pfam" id="PF03462">
    <property type="entry name" value="PCRF"/>
    <property type="match status" value="1"/>
</dbReference>
<dbReference type="Pfam" id="PF00472">
    <property type="entry name" value="RF-1"/>
    <property type="match status" value="1"/>
</dbReference>
<dbReference type="SMART" id="SM00937">
    <property type="entry name" value="PCRF"/>
    <property type="match status" value="1"/>
</dbReference>
<dbReference type="SUPFAM" id="SSF75620">
    <property type="entry name" value="Release factor"/>
    <property type="match status" value="1"/>
</dbReference>
<dbReference type="PROSITE" id="PS00745">
    <property type="entry name" value="RF_PROK_I"/>
    <property type="match status" value="1"/>
</dbReference>
<evidence type="ECO:0000255" key="1">
    <source>
        <dbReference type="HAMAP-Rule" id="MF_00094"/>
    </source>
</evidence>
<keyword id="KW-0963">Cytoplasm</keyword>
<keyword id="KW-0488">Methylation</keyword>
<keyword id="KW-0648">Protein biosynthesis</keyword>
<keyword id="KW-1185">Reference proteome</keyword>
<protein>
    <recommendedName>
        <fullName evidence="1">Peptide chain release factor 2</fullName>
        <shortName evidence="1">RF-2</shortName>
    </recommendedName>
</protein>
<feature type="chain" id="PRO_1000075529" description="Peptide chain release factor 2">
    <location>
        <begin position="1"/>
        <end position="373"/>
    </location>
</feature>
<feature type="modified residue" description="N5-methylglutamine" evidence="1">
    <location>
        <position position="251"/>
    </location>
</feature>